<gene>
    <name evidence="1" type="primary">rplM</name>
    <name type="ordered locus">DVU_2518</name>
</gene>
<name>RL13_NITV2</name>
<feature type="chain" id="PRO_0000261722" description="Large ribosomal subunit protein uL13">
    <location>
        <begin position="1"/>
        <end position="144"/>
    </location>
</feature>
<keyword id="KW-1185">Reference proteome</keyword>
<keyword id="KW-0687">Ribonucleoprotein</keyword>
<keyword id="KW-0689">Ribosomal protein</keyword>
<dbReference type="EMBL" id="AE017285">
    <property type="protein sequence ID" value="AAS96990.1"/>
    <property type="molecule type" value="Genomic_DNA"/>
</dbReference>
<dbReference type="RefSeq" id="WP_010939788.1">
    <property type="nucleotide sequence ID" value="NC_002937.3"/>
</dbReference>
<dbReference type="RefSeq" id="YP_011730.1">
    <property type="nucleotide sequence ID" value="NC_002937.3"/>
</dbReference>
<dbReference type="SMR" id="Q728T4"/>
<dbReference type="STRING" id="882.DVU_2518"/>
<dbReference type="PaxDb" id="882-DVU_2518"/>
<dbReference type="EnsemblBacteria" id="AAS96990">
    <property type="protein sequence ID" value="AAS96990"/>
    <property type="gene ID" value="DVU_2518"/>
</dbReference>
<dbReference type="KEGG" id="dvu:DVU_2518"/>
<dbReference type="PATRIC" id="fig|882.5.peg.2278"/>
<dbReference type="eggNOG" id="COG0102">
    <property type="taxonomic scope" value="Bacteria"/>
</dbReference>
<dbReference type="HOGENOM" id="CLU_082184_2_2_7"/>
<dbReference type="OrthoDB" id="9801330at2"/>
<dbReference type="PhylomeDB" id="Q728T4"/>
<dbReference type="Proteomes" id="UP000002194">
    <property type="component" value="Chromosome"/>
</dbReference>
<dbReference type="GO" id="GO:0022625">
    <property type="term" value="C:cytosolic large ribosomal subunit"/>
    <property type="evidence" value="ECO:0007669"/>
    <property type="project" value="TreeGrafter"/>
</dbReference>
<dbReference type="GO" id="GO:0003729">
    <property type="term" value="F:mRNA binding"/>
    <property type="evidence" value="ECO:0007669"/>
    <property type="project" value="TreeGrafter"/>
</dbReference>
<dbReference type="GO" id="GO:0003735">
    <property type="term" value="F:structural constituent of ribosome"/>
    <property type="evidence" value="ECO:0007669"/>
    <property type="project" value="InterPro"/>
</dbReference>
<dbReference type="GO" id="GO:0017148">
    <property type="term" value="P:negative regulation of translation"/>
    <property type="evidence" value="ECO:0007669"/>
    <property type="project" value="TreeGrafter"/>
</dbReference>
<dbReference type="GO" id="GO:0006412">
    <property type="term" value="P:translation"/>
    <property type="evidence" value="ECO:0007669"/>
    <property type="project" value="UniProtKB-UniRule"/>
</dbReference>
<dbReference type="CDD" id="cd00392">
    <property type="entry name" value="Ribosomal_L13"/>
    <property type="match status" value="1"/>
</dbReference>
<dbReference type="FunFam" id="3.90.1180.10:FF:000001">
    <property type="entry name" value="50S ribosomal protein L13"/>
    <property type="match status" value="1"/>
</dbReference>
<dbReference type="Gene3D" id="3.90.1180.10">
    <property type="entry name" value="Ribosomal protein L13"/>
    <property type="match status" value="1"/>
</dbReference>
<dbReference type="HAMAP" id="MF_01366">
    <property type="entry name" value="Ribosomal_uL13"/>
    <property type="match status" value="1"/>
</dbReference>
<dbReference type="InterPro" id="IPR005822">
    <property type="entry name" value="Ribosomal_uL13"/>
</dbReference>
<dbReference type="InterPro" id="IPR005823">
    <property type="entry name" value="Ribosomal_uL13_bac-type"/>
</dbReference>
<dbReference type="InterPro" id="IPR023563">
    <property type="entry name" value="Ribosomal_uL13_CS"/>
</dbReference>
<dbReference type="InterPro" id="IPR036899">
    <property type="entry name" value="Ribosomal_uL13_sf"/>
</dbReference>
<dbReference type="NCBIfam" id="TIGR01066">
    <property type="entry name" value="rplM_bact"/>
    <property type="match status" value="1"/>
</dbReference>
<dbReference type="PANTHER" id="PTHR11545:SF2">
    <property type="entry name" value="LARGE RIBOSOMAL SUBUNIT PROTEIN UL13M"/>
    <property type="match status" value="1"/>
</dbReference>
<dbReference type="PANTHER" id="PTHR11545">
    <property type="entry name" value="RIBOSOMAL PROTEIN L13"/>
    <property type="match status" value="1"/>
</dbReference>
<dbReference type="Pfam" id="PF00572">
    <property type="entry name" value="Ribosomal_L13"/>
    <property type="match status" value="1"/>
</dbReference>
<dbReference type="PIRSF" id="PIRSF002181">
    <property type="entry name" value="Ribosomal_L13"/>
    <property type="match status" value="1"/>
</dbReference>
<dbReference type="SUPFAM" id="SSF52161">
    <property type="entry name" value="Ribosomal protein L13"/>
    <property type="match status" value="1"/>
</dbReference>
<dbReference type="PROSITE" id="PS00783">
    <property type="entry name" value="RIBOSOMAL_L13"/>
    <property type="match status" value="1"/>
</dbReference>
<sequence>MKTFSPTPENINREWFVVDAEDKILGRLATQIAHRLRGKHKPEFAPHMDNGDFIVVVNCEKIKVTGKKLDQKKYYNHSGYVGGLRETSLEKLLASKPEEVLLKAVRGMLPRNRLGRAMLTKLKVYRGTEHPHAAQKPTPLELTY</sequence>
<organism>
    <name type="scientific">Nitratidesulfovibrio vulgaris (strain ATCC 29579 / DSM 644 / CCUG 34227 / NCIMB 8303 / VKM B-1760 / Hildenborough)</name>
    <name type="common">Desulfovibrio vulgaris</name>
    <dbReference type="NCBI Taxonomy" id="882"/>
    <lineage>
        <taxon>Bacteria</taxon>
        <taxon>Pseudomonadati</taxon>
        <taxon>Thermodesulfobacteriota</taxon>
        <taxon>Desulfovibrionia</taxon>
        <taxon>Desulfovibrionales</taxon>
        <taxon>Desulfovibrionaceae</taxon>
        <taxon>Nitratidesulfovibrio</taxon>
    </lineage>
</organism>
<evidence type="ECO:0000255" key="1">
    <source>
        <dbReference type="HAMAP-Rule" id="MF_01366"/>
    </source>
</evidence>
<evidence type="ECO:0000305" key="2"/>
<reference key="1">
    <citation type="journal article" date="2004" name="Nat. Biotechnol.">
        <title>The genome sequence of the anaerobic, sulfate-reducing bacterium Desulfovibrio vulgaris Hildenborough.</title>
        <authorList>
            <person name="Heidelberg J.F."/>
            <person name="Seshadri R."/>
            <person name="Haveman S.A."/>
            <person name="Hemme C.L."/>
            <person name="Paulsen I.T."/>
            <person name="Kolonay J.F."/>
            <person name="Eisen J.A."/>
            <person name="Ward N.L."/>
            <person name="Methe B.A."/>
            <person name="Brinkac L.M."/>
            <person name="Daugherty S.C."/>
            <person name="DeBoy R.T."/>
            <person name="Dodson R.J."/>
            <person name="Durkin A.S."/>
            <person name="Madupu R."/>
            <person name="Nelson W.C."/>
            <person name="Sullivan S.A."/>
            <person name="Fouts D.E."/>
            <person name="Haft D.H."/>
            <person name="Selengut J."/>
            <person name="Peterson J.D."/>
            <person name="Davidsen T.M."/>
            <person name="Zafar N."/>
            <person name="Zhou L."/>
            <person name="Radune D."/>
            <person name="Dimitrov G."/>
            <person name="Hance M."/>
            <person name="Tran K."/>
            <person name="Khouri H.M."/>
            <person name="Gill J."/>
            <person name="Utterback T.R."/>
            <person name="Feldblyum T.V."/>
            <person name="Wall J.D."/>
            <person name="Voordouw G."/>
            <person name="Fraser C.M."/>
        </authorList>
    </citation>
    <scope>NUCLEOTIDE SEQUENCE [LARGE SCALE GENOMIC DNA]</scope>
    <source>
        <strain>ATCC 29579 / DSM 644 / CCUG 34227 / NCIMB 8303 / VKM B-1760 / Hildenborough</strain>
    </source>
</reference>
<comment type="function">
    <text evidence="1">This protein is one of the early assembly proteins of the 50S ribosomal subunit, although it is not seen to bind rRNA by itself. It is important during the early stages of 50S assembly.</text>
</comment>
<comment type="subunit">
    <text evidence="1">Part of the 50S ribosomal subunit.</text>
</comment>
<comment type="similarity">
    <text evidence="1">Belongs to the universal ribosomal protein uL13 family.</text>
</comment>
<protein>
    <recommendedName>
        <fullName evidence="1">Large ribosomal subunit protein uL13</fullName>
    </recommendedName>
    <alternativeName>
        <fullName evidence="2">50S ribosomal protein L13</fullName>
    </alternativeName>
</protein>
<accession>Q728T4</accession>
<proteinExistence type="inferred from homology"/>